<protein>
    <recommendedName>
        <fullName evidence="4">Amino acid transporter AVT1A</fullName>
        <shortName evidence="3">AtAvt1A</shortName>
    </recommendedName>
</protein>
<organism>
    <name type="scientific">Arabidopsis thaliana</name>
    <name type="common">Mouse-ear cress</name>
    <dbReference type="NCBI Taxonomy" id="3702"/>
    <lineage>
        <taxon>Eukaryota</taxon>
        <taxon>Viridiplantae</taxon>
        <taxon>Streptophyta</taxon>
        <taxon>Embryophyta</taxon>
        <taxon>Tracheophyta</taxon>
        <taxon>Spermatophyta</taxon>
        <taxon>Magnoliopsida</taxon>
        <taxon>eudicotyledons</taxon>
        <taxon>Gunneridae</taxon>
        <taxon>Pentapetalae</taxon>
        <taxon>rosids</taxon>
        <taxon>malvids</taxon>
        <taxon>Brassicales</taxon>
        <taxon>Brassicaceae</taxon>
        <taxon>Camelineae</taxon>
        <taxon>Arabidopsis</taxon>
    </lineage>
</organism>
<accession>O80668</accession>
<accession>Q8H139</accession>
<accession>Q94BP2</accession>
<dbReference type="EMBL" id="AC004261">
    <property type="protein sequence ID" value="AAD11993.2"/>
    <property type="molecule type" value="Genomic_DNA"/>
</dbReference>
<dbReference type="EMBL" id="CP002685">
    <property type="protein sequence ID" value="AEC09942.1"/>
    <property type="molecule type" value="Genomic_DNA"/>
</dbReference>
<dbReference type="EMBL" id="AY039978">
    <property type="protein sequence ID" value="AAK64155.1"/>
    <property type="molecule type" value="mRNA"/>
</dbReference>
<dbReference type="EMBL" id="AY079364">
    <property type="protein sequence ID" value="AAL85095.1"/>
    <property type="molecule type" value="mRNA"/>
</dbReference>
<dbReference type="EMBL" id="BT000792">
    <property type="protein sequence ID" value="AAN31931.1"/>
    <property type="molecule type" value="mRNA"/>
</dbReference>
<dbReference type="PIR" id="T02100">
    <property type="entry name" value="T02100"/>
</dbReference>
<dbReference type="RefSeq" id="NP_030664.1">
    <property type="nucleotide sequence ID" value="NM_129684.3"/>
</dbReference>
<dbReference type="SMR" id="O80668"/>
<dbReference type="FunCoup" id="O80668">
    <property type="interactions" value="204"/>
</dbReference>
<dbReference type="IntAct" id="O80668">
    <property type="interactions" value="1"/>
</dbReference>
<dbReference type="STRING" id="3702.O80668"/>
<dbReference type="iPTMnet" id="O80668"/>
<dbReference type="PaxDb" id="3702-AT2G41190.1"/>
<dbReference type="ProteomicsDB" id="240935"/>
<dbReference type="EnsemblPlants" id="AT2G41190.1">
    <property type="protein sequence ID" value="AT2G41190.1"/>
    <property type="gene ID" value="AT2G41190"/>
</dbReference>
<dbReference type="GeneID" id="818718"/>
<dbReference type="Gramene" id="AT2G41190.1">
    <property type="protein sequence ID" value="AT2G41190.1"/>
    <property type="gene ID" value="AT2G41190"/>
</dbReference>
<dbReference type="KEGG" id="ath:AT2G41190"/>
<dbReference type="Araport" id="AT2G41190"/>
<dbReference type="TAIR" id="AT2G41190"/>
<dbReference type="eggNOG" id="KOG1303">
    <property type="taxonomic scope" value="Eukaryota"/>
</dbReference>
<dbReference type="HOGENOM" id="CLU_009646_1_0_1"/>
<dbReference type="InParanoid" id="O80668"/>
<dbReference type="OMA" id="FHCMMEW"/>
<dbReference type="PhylomeDB" id="O80668"/>
<dbReference type="PRO" id="PR:O80668"/>
<dbReference type="Proteomes" id="UP000006548">
    <property type="component" value="Chromosome 2"/>
</dbReference>
<dbReference type="ExpressionAtlas" id="O80668">
    <property type="expression patterns" value="baseline and differential"/>
</dbReference>
<dbReference type="GO" id="GO:0016020">
    <property type="term" value="C:membrane"/>
    <property type="evidence" value="ECO:0007669"/>
    <property type="project" value="UniProtKB-SubCell"/>
</dbReference>
<dbReference type="GO" id="GO:0000325">
    <property type="term" value="C:plant-type vacuole"/>
    <property type="evidence" value="ECO:0007005"/>
    <property type="project" value="TAIR"/>
</dbReference>
<dbReference type="GO" id="GO:0006865">
    <property type="term" value="P:amino acid transport"/>
    <property type="evidence" value="ECO:0007669"/>
    <property type="project" value="UniProtKB-KW"/>
</dbReference>
<dbReference type="FunFam" id="1.20.1740.10:FF:000047">
    <property type="entry name" value="Amino acid transporter AVT1A"/>
    <property type="match status" value="1"/>
</dbReference>
<dbReference type="Gene3D" id="1.20.1740.10">
    <property type="entry name" value="Amino acid/polyamine transporter I"/>
    <property type="match status" value="1"/>
</dbReference>
<dbReference type="InterPro" id="IPR013057">
    <property type="entry name" value="AA_transpt_TM"/>
</dbReference>
<dbReference type="PANTHER" id="PTHR48017">
    <property type="entry name" value="OS05G0424000 PROTEIN-RELATED"/>
    <property type="match status" value="1"/>
</dbReference>
<dbReference type="Pfam" id="PF01490">
    <property type="entry name" value="Aa_trans"/>
    <property type="match status" value="1"/>
</dbReference>
<gene>
    <name evidence="3" type="primary">AVT1A</name>
    <name evidence="5" type="ordered locus">At2g41190</name>
    <name evidence="6" type="ORF">T3K9.4</name>
</gene>
<reference key="1">
    <citation type="journal article" date="1999" name="Nature">
        <title>Sequence and analysis of chromosome 2 of the plant Arabidopsis thaliana.</title>
        <authorList>
            <person name="Lin X."/>
            <person name="Kaul S."/>
            <person name="Rounsley S.D."/>
            <person name="Shea T.P."/>
            <person name="Benito M.-I."/>
            <person name="Town C.D."/>
            <person name="Fujii C.Y."/>
            <person name="Mason T.M."/>
            <person name="Bowman C.L."/>
            <person name="Barnstead M.E."/>
            <person name="Feldblyum T.V."/>
            <person name="Buell C.R."/>
            <person name="Ketchum K.A."/>
            <person name="Lee J.J."/>
            <person name="Ronning C.M."/>
            <person name="Koo H.L."/>
            <person name="Moffat K.S."/>
            <person name="Cronin L.A."/>
            <person name="Shen M."/>
            <person name="Pai G."/>
            <person name="Van Aken S."/>
            <person name="Umayam L."/>
            <person name="Tallon L.J."/>
            <person name="Gill J.E."/>
            <person name="Adams M.D."/>
            <person name="Carrera A.J."/>
            <person name="Creasy T.H."/>
            <person name="Goodman H.M."/>
            <person name="Somerville C.R."/>
            <person name="Copenhaver G.P."/>
            <person name="Preuss D."/>
            <person name="Nierman W.C."/>
            <person name="White O."/>
            <person name="Eisen J.A."/>
            <person name="Salzberg S.L."/>
            <person name="Fraser C.M."/>
            <person name="Venter J.C."/>
        </authorList>
    </citation>
    <scope>NUCLEOTIDE SEQUENCE [LARGE SCALE GENOMIC DNA]</scope>
    <source>
        <strain>cv. Columbia</strain>
    </source>
</reference>
<reference key="2">
    <citation type="journal article" date="2017" name="Plant J.">
        <title>Araport11: a complete reannotation of the Arabidopsis thaliana reference genome.</title>
        <authorList>
            <person name="Cheng C.Y."/>
            <person name="Krishnakumar V."/>
            <person name="Chan A.P."/>
            <person name="Thibaud-Nissen F."/>
            <person name="Schobel S."/>
            <person name="Town C.D."/>
        </authorList>
    </citation>
    <scope>GENOME REANNOTATION</scope>
    <source>
        <strain>cv. Columbia</strain>
    </source>
</reference>
<reference key="3">
    <citation type="journal article" date="2003" name="Science">
        <title>Empirical analysis of transcriptional activity in the Arabidopsis genome.</title>
        <authorList>
            <person name="Yamada K."/>
            <person name="Lim J."/>
            <person name="Dale J.M."/>
            <person name="Chen H."/>
            <person name="Shinn P."/>
            <person name="Palm C.J."/>
            <person name="Southwick A.M."/>
            <person name="Wu H.C."/>
            <person name="Kim C.J."/>
            <person name="Nguyen M."/>
            <person name="Pham P.K."/>
            <person name="Cheuk R.F."/>
            <person name="Karlin-Newmann G."/>
            <person name="Liu S.X."/>
            <person name="Lam B."/>
            <person name="Sakano H."/>
            <person name="Wu T."/>
            <person name="Yu G."/>
            <person name="Miranda M."/>
            <person name="Quach H.L."/>
            <person name="Tripp M."/>
            <person name="Chang C.H."/>
            <person name="Lee J.M."/>
            <person name="Toriumi M.J."/>
            <person name="Chan M.M."/>
            <person name="Tang C.C."/>
            <person name="Onodera C.S."/>
            <person name="Deng J.M."/>
            <person name="Akiyama K."/>
            <person name="Ansari Y."/>
            <person name="Arakawa T."/>
            <person name="Banh J."/>
            <person name="Banno F."/>
            <person name="Bowser L."/>
            <person name="Brooks S.Y."/>
            <person name="Carninci P."/>
            <person name="Chao Q."/>
            <person name="Choy N."/>
            <person name="Enju A."/>
            <person name="Goldsmith A.D."/>
            <person name="Gurjal M."/>
            <person name="Hansen N.F."/>
            <person name="Hayashizaki Y."/>
            <person name="Johnson-Hopson C."/>
            <person name="Hsuan V.W."/>
            <person name="Iida K."/>
            <person name="Karnes M."/>
            <person name="Khan S."/>
            <person name="Koesema E."/>
            <person name="Ishida J."/>
            <person name="Jiang P.X."/>
            <person name="Jones T."/>
            <person name="Kawai J."/>
            <person name="Kamiya A."/>
            <person name="Meyers C."/>
            <person name="Nakajima M."/>
            <person name="Narusaka M."/>
            <person name="Seki M."/>
            <person name="Sakurai T."/>
            <person name="Satou M."/>
            <person name="Tamse R."/>
            <person name="Vaysberg M."/>
            <person name="Wallender E.K."/>
            <person name="Wong C."/>
            <person name="Yamamura Y."/>
            <person name="Yuan S."/>
            <person name="Shinozaki K."/>
            <person name="Davis R.W."/>
            <person name="Theologis A."/>
            <person name="Ecker J.R."/>
        </authorList>
    </citation>
    <scope>NUCLEOTIDE SEQUENCE [LARGE SCALE MRNA]</scope>
    <source>
        <strain>cv. Columbia</strain>
    </source>
</reference>
<reference key="4">
    <citation type="journal article" date="2017" name="FEBS Lett.">
        <title>Functional identification of AtAVT3, a family of vacuolar amino acid transporters, in Arabidopsis.</title>
        <authorList>
            <person name="Fujiki Y."/>
            <person name="Teshima H."/>
            <person name="Kashiwao S."/>
            <person name="Kawano-Kawada M."/>
            <person name="Ohsumi Y."/>
            <person name="Kakinuma Y."/>
            <person name="Sekito T."/>
        </authorList>
    </citation>
    <scope>GENE FAMILY</scope>
    <scope>NOMENCLATURE</scope>
</reference>
<evidence type="ECO:0000255" key="1"/>
<evidence type="ECO:0000256" key="2">
    <source>
        <dbReference type="SAM" id="MobiDB-lite"/>
    </source>
</evidence>
<evidence type="ECO:0000303" key="3">
    <source>
    </source>
</evidence>
<evidence type="ECO:0000305" key="4"/>
<evidence type="ECO:0000312" key="5">
    <source>
        <dbReference type="Araport" id="AT2G41190"/>
    </source>
</evidence>
<evidence type="ECO:0000312" key="6">
    <source>
        <dbReference type="EMBL" id="AEC09942.1"/>
    </source>
</evidence>
<comment type="subcellular location">
    <subcellularLocation>
        <location evidence="1">Membrane</location>
        <topology evidence="1">Multi-pass membrane protein</topology>
    </subcellularLocation>
</comment>
<comment type="similarity">
    <text evidence="4">Belongs to the amino acid/polyamine transporter 2 family. Amino acid/auxin permease (AAAP) (TC 2.A.18.5) subfamily.</text>
</comment>
<keyword id="KW-0029">Amino-acid transport</keyword>
<keyword id="KW-0472">Membrane</keyword>
<keyword id="KW-1185">Reference proteome</keyword>
<keyword id="KW-0812">Transmembrane</keyword>
<keyword id="KW-1133">Transmembrane helix</keyword>
<keyword id="KW-0813">Transport</keyword>
<feature type="chain" id="PRO_0000440102" description="Amino acid transporter AVT1A">
    <location>
        <begin position="1"/>
        <end position="536"/>
    </location>
</feature>
<feature type="transmembrane region" description="Helical; Name=1" evidence="1">
    <location>
        <begin position="146"/>
        <end position="166"/>
    </location>
</feature>
<feature type="transmembrane region" description="Helical; Name=2" evidence="1">
    <location>
        <begin position="177"/>
        <end position="197"/>
    </location>
</feature>
<feature type="transmembrane region" description="Helical; Name=3" evidence="1">
    <location>
        <begin position="224"/>
        <end position="244"/>
    </location>
</feature>
<feature type="transmembrane region" description="Helical; Name=4" evidence="1">
    <location>
        <begin position="265"/>
        <end position="285"/>
    </location>
</feature>
<feature type="transmembrane region" description="Helical; Name=5" evidence="1">
    <location>
        <begin position="300"/>
        <end position="320"/>
    </location>
</feature>
<feature type="transmembrane region" description="Helical; Name=6" evidence="1">
    <location>
        <begin position="332"/>
        <end position="352"/>
    </location>
</feature>
<feature type="transmembrane region" description="Helical; Name=7" evidence="1">
    <location>
        <begin position="366"/>
        <end position="386"/>
    </location>
</feature>
<feature type="transmembrane region" description="Helical; Name=8" evidence="1">
    <location>
        <begin position="408"/>
        <end position="425"/>
    </location>
</feature>
<feature type="transmembrane region" description="Helical; Name=9" evidence="1">
    <location>
        <begin position="445"/>
        <end position="465"/>
    </location>
</feature>
<feature type="transmembrane region" description="Helical; Name=10" evidence="1">
    <location>
        <begin position="468"/>
        <end position="488"/>
    </location>
</feature>
<feature type="transmembrane region" description="Helical; Name=11" evidence="1">
    <location>
        <begin position="506"/>
        <end position="526"/>
    </location>
</feature>
<feature type="region of interest" description="Disordered" evidence="2">
    <location>
        <begin position="1"/>
        <end position="68"/>
    </location>
</feature>
<feature type="compositionally biased region" description="Basic and acidic residues" evidence="2">
    <location>
        <begin position="1"/>
        <end position="14"/>
    </location>
</feature>
<feature type="compositionally biased region" description="Acidic residues" evidence="2">
    <location>
        <begin position="15"/>
        <end position="27"/>
    </location>
</feature>
<proteinExistence type="evidence at transcript level"/>
<sequence>MEDKNNDKEKKTDVTFEDDEDNEDLEDNSSKYENDSETDQSDLGDLPGDAVDRDDDIDEPFISQVQWPQSFRETTDSYTIAASPIFGSLRSNPPSFYRASRSNLDVESKAPLLPERHDDSDKASATQSAWSHKGSFAEELPIGGYGCSVIQTIFNAINVMAGVGLLSTPYTVKEAGWASMVILLLFAVICCYTATLMKDCFENKTGIITYPDIGEAAFGKYGRILICMLLYTELYSYCVEFIILEGDNLTGLFPGTSLDLLGFRLDSKHLFGILTALIVLPTVWLKDLRIISYLSAGGVIATALIAVSVFFLGTTGGIGFHHTGQAVKWNGIPFAIGIYGFCYSGHSVFPNIYQSMADKTKFNKAVITCFIICVLLYGGVAIMGYLMFGEATLSQITLNMPQDQFFSKVAQWTTVVSPFTKYALLMNPLARSIEELLPERMSENIWCFLLLRTALVASSVCSAFLIPFFGLMMALIGSLLSILVAIIMPALCFIKIMGNKATRTQMILSSIIVAIGVVSGTLGTYSSVAKIIRNYQ</sequence>
<name>AVT1A_ARATH</name>